<feature type="chain" id="PRO_0000159150" description="Uncharacterized polyferredoxin-like protein MJ0514.2">
    <location>
        <begin position="1"/>
        <end position="408"/>
    </location>
</feature>
<feature type="domain" description="4Fe-4S ferredoxin-type 1" evidence="2">
    <location>
        <begin position="42"/>
        <end position="72"/>
    </location>
</feature>
<feature type="domain" description="4Fe-4S ferredoxin-type 2" evidence="2">
    <location>
        <begin position="78"/>
        <end position="107"/>
    </location>
</feature>
<feature type="domain" description="4Fe-4S ferredoxin-type 3" evidence="2">
    <location>
        <begin position="122"/>
        <end position="151"/>
    </location>
</feature>
<feature type="domain" description="4Fe-4S ferredoxin-type 4" evidence="2">
    <location>
        <begin position="151"/>
        <end position="181"/>
    </location>
</feature>
<feature type="domain" description="4Fe-4S ferredoxin-type 5" evidence="2">
    <location>
        <begin position="212"/>
        <end position="241"/>
    </location>
</feature>
<feature type="domain" description="4Fe-4S ferredoxin-type 6" evidence="2">
    <location>
        <begin position="233"/>
        <end position="265"/>
    </location>
</feature>
<feature type="domain" description="4Fe-4S ferredoxin-type 7" evidence="2">
    <location>
        <begin position="273"/>
        <end position="302"/>
    </location>
</feature>
<feature type="domain" description="4Fe-4S ferredoxin-type 8" evidence="2">
    <location>
        <begin position="304"/>
        <end position="333"/>
    </location>
</feature>
<feature type="binding site" evidence="1">
    <location>
        <position position="52"/>
    </location>
    <ligand>
        <name>[4Fe-4S] cluster</name>
        <dbReference type="ChEBI" id="CHEBI:49883"/>
    </ligand>
</feature>
<feature type="binding site" evidence="1">
    <location>
        <position position="55"/>
    </location>
    <ligand>
        <name>[4Fe-4S] cluster</name>
        <dbReference type="ChEBI" id="CHEBI:49883"/>
    </ligand>
</feature>
<feature type="binding site" evidence="1">
    <location>
        <position position="58"/>
    </location>
    <ligand>
        <name>[4Fe-4S] cluster</name>
        <dbReference type="ChEBI" id="CHEBI:49883"/>
    </ligand>
</feature>
<feature type="binding site" evidence="1">
    <location>
        <position position="62"/>
    </location>
    <ligand>
        <name>[4Fe-4S] cluster</name>
        <dbReference type="ChEBI" id="CHEBI:49883"/>
    </ligand>
</feature>
<feature type="binding site" evidence="1">
    <location>
        <position position="87"/>
    </location>
    <ligand>
        <name>[4Fe-4S] cluster</name>
        <dbReference type="ChEBI" id="CHEBI:49883"/>
    </ligand>
</feature>
<feature type="binding site" evidence="1">
    <location>
        <position position="90"/>
    </location>
    <ligand>
        <name>[4Fe-4S] cluster</name>
        <dbReference type="ChEBI" id="CHEBI:49883"/>
    </ligand>
</feature>
<feature type="binding site" evidence="1">
    <location>
        <position position="93"/>
    </location>
    <ligand>
        <name>[4Fe-4S] cluster</name>
        <dbReference type="ChEBI" id="CHEBI:49883"/>
    </ligand>
</feature>
<feature type="binding site" evidence="1">
    <location>
        <position position="97"/>
    </location>
    <ligand>
        <name>[4Fe-4S] cluster</name>
        <dbReference type="ChEBI" id="CHEBI:49883"/>
    </ligand>
</feature>
<feature type="binding site" evidence="1">
    <location>
        <position position="131"/>
    </location>
    <ligand>
        <name>[4Fe-4S] cluster</name>
        <dbReference type="ChEBI" id="CHEBI:49883"/>
    </ligand>
</feature>
<feature type="binding site" evidence="1">
    <location>
        <position position="134"/>
    </location>
    <ligand>
        <name>[4Fe-4S] cluster</name>
        <dbReference type="ChEBI" id="CHEBI:49883"/>
    </ligand>
</feature>
<feature type="binding site" evidence="1">
    <location>
        <position position="137"/>
    </location>
    <ligand>
        <name>[4Fe-4S] cluster</name>
        <dbReference type="ChEBI" id="CHEBI:49883"/>
    </ligand>
</feature>
<feature type="binding site" evidence="1">
    <location>
        <position position="141"/>
    </location>
    <ligand>
        <name>[4Fe-4S] cluster</name>
        <dbReference type="ChEBI" id="CHEBI:49883"/>
    </ligand>
</feature>
<feature type="binding site" evidence="1">
    <location>
        <position position="160"/>
    </location>
    <ligand>
        <name>[4Fe-4S] cluster</name>
        <dbReference type="ChEBI" id="CHEBI:49883"/>
    </ligand>
</feature>
<feature type="binding site" evidence="1">
    <location>
        <position position="163"/>
    </location>
    <ligand>
        <name>[4Fe-4S] cluster</name>
        <dbReference type="ChEBI" id="CHEBI:49883"/>
    </ligand>
</feature>
<feature type="binding site" evidence="1">
    <location>
        <position position="166"/>
    </location>
    <ligand>
        <name>[4Fe-4S] cluster</name>
        <dbReference type="ChEBI" id="CHEBI:49883"/>
    </ligand>
</feature>
<feature type="binding site" evidence="1">
    <location>
        <position position="170"/>
    </location>
    <ligand>
        <name>[4Fe-4S] cluster</name>
        <dbReference type="ChEBI" id="CHEBI:49883"/>
    </ligand>
</feature>
<feature type="binding site" evidence="1">
    <location>
        <position position="282"/>
    </location>
    <ligand>
        <name>[4Fe-4S] cluster</name>
        <dbReference type="ChEBI" id="CHEBI:49883"/>
    </ligand>
</feature>
<feature type="binding site" evidence="1">
    <location>
        <position position="285"/>
    </location>
    <ligand>
        <name>[4Fe-4S] cluster</name>
        <dbReference type="ChEBI" id="CHEBI:49883"/>
    </ligand>
</feature>
<feature type="binding site" evidence="1">
    <location>
        <position position="288"/>
    </location>
    <ligand>
        <name>[4Fe-4S] cluster</name>
        <dbReference type="ChEBI" id="CHEBI:49883"/>
    </ligand>
</feature>
<feature type="binding site" evidence="1">
    <location>
        <position position="292"/>
    </location>
    <ligand>
        <name>[4Fe-4S] cluster</name>
        <dbReference type="ChEBI" id="CHEBI:49883"/>
    </ligand>
</feature>
<reference key="1">
    <citation type="journal article" date="1996" name="Science">
        <title>Complete genome sequence of the methanogenic archaeon, Methanococcus jannaschii.</title>
        <authorList>
            <person name="Bult C.J."/>
            <person name="White O."/>
            <person name="Olsen G.J."/>
            <person name="Zhou L."/>
            <person name="Fleischmann R.D."/>
            <person name="Sutton G.G."/>
            <person name="Blake J.A."/>
            <person name="FitzGerald L.M."/>
            <person name="Clayton R.A."/>
            <person name="Gocayne J.D."/>
            <person name="Kerlavage A.R."/>
            <person name="Dougherty B.A."/>
            <person name="Tomb J.-F."/>
            <person name="Adams M.D."/>
            <person name="Reich C.I."/>
            <person name="Overbeek R."/>
            <person name="Kirkness E.F."/>
            <person name="Weinstock K.G."/>
            <person name="Merrick J.M."/>
            <person name="Glodek A."/>
            <person name="Scott J.L."/>
            <person name="Geoghagen N.S.M."/>
            <person name="Weidman J.F."/>
            <person name="Fuhrmann J.L."/>
            <person name="Nguyen D."/>
            <person name="Utterback T.R."/>
            <person name="Kelley J.M."/>
            <person name="Peterson J.D."/>
            <person name="Sadow P.W."/>
            <person name="Hanna M.C."/>
            <person name="Cotton M.D."/>
            <person name="Roberts K.M."/>
            <person name="Hurst M.A."/>
            <person name="Kaine B.P."/>
            <person name="Borodovsky M."/>
            <person name="Klenk H.-P."/>
            <person name="Fraser C.M."/>
            <person name="Smith H.O."/>
            <person name="Woese C.R."/>
            <person name="Venter J.C."/>
        </authorList>
    </citation>
    <scope>NUCLEOTIDE SEQUENCE [LARGE SCALE GENOMIC DNA]</scope>
    <source>
        <strain>ATCC 43067 / DSM 2661 / JAL-1 / JCM 10045 / NBRC 100440</strain>
    </source>
</reference>
<proteinExistence type="predicted"/>
<dbReference type="EMBL" id="L77117">
    <property type="protein sequence ID" value="AAB98509.1"/>
    <property type="molecule type" value="Genomic_DNA"/>
</dbReference>
<dbReference type="STRING" id="243232.MJ_0514.2"/>
<dbReference type="PaxDb" id="243232-MJ_0514.2"/>
<dbReference type="EnsemblBacteria" id="AAB98509">
    <property type="protein sequence ID" value="AAB98509"/>
    <property type="gene ID" value="MJ_0514.2"/>
</dbReference>
<dbReference type="KEGG" id="mja:MJ_0514.2"/>
<dbReference type="eggNOG" id="arCOG02183">
    <property type="taxonomic scope" value="Archaea"/>
</dbReference>
<dbReference type="HOGENOM" id="CLU_061721_0_0_2"/>
<dbReference type="InParanoid" id="P81293"/>
<dbReference type="PhylomeDB" id="P81293"/>
<dbReference type="Proteomes" id="UP000000805">
    <property type="component" value="Chromosome"/>
</dbReference>
<dbReference type="GO" id="GO:0051539">
    <property type="term" value="F:4 iron, 4 sulfur cluster binding"/>
    <property type="evidence" value="ECO:0007669"/>
    <property type="project" value="UniProtKB-KW"/>
</dbReference>
<dbReference type="GO" id="GO:0046872">
    <property type="term" value="F:metal ion binding"/>
    <property type="evidence" value="ECO:0007669"/>
    <property type="project" value="UniProtKB-KW"/>
</dbReference>
<dbReference type="GO" id="GO:0016491">
    <property type="term" value="F:oxidoreductase activity"/>
    <property type="evidence" value="ECO:0007669"/>
    <property type="project" value="UniProtKB-ARBA"/>
</dbReference>
<dbReference type="CDD" id="cd10549">
    <property type="entry name" value="MtMvhB_like"/>
    <property type="match status" value="2"/>
</dbReference>
<dbReference type="Gene3D" id="3.30.70.20">
    <property type="match status" value="3"/>
</dbReference>
<dbReference type="Gene3D" id="3.30.70.3270">
    <property type="match status" value="1"/>
</dbReference>
<dbReference type="InterPro" id="IPR017896">
    <property type="entry name" value="4Fe4S_Fe-S-bd"/>
</dbReference>
<dbReference type="InterPro" id="IPR017900">
    <property type="entry name" value="4Fe4S_Fe_S_CS"/>
</dbReference>
<dbReference type="InterPro" id="IPR050572">
    <property type="entry name" value="Fe-S_Ferredoxin"/>
</dbReference>
<dbReference type="PANTHER" id="PTHR43687">
    <property type="entry name" value="ADENYLYLSULFATE REDUCTASE, BETA SUBUNIT"/>
    <property type="match status" value="1"/>
</dbReference>
<dbReference type="PANTHER" id="PTHR43687:SF1">
    <property type="entry name" value="FERREDOXIN III"/>
    <property type="match status" value="1"/>
</dbReference>
<dbReference type="Pfam" id="PF00037">
    <property type="entry name" value="Fer4"/>
    <property type="match status" value="1"/>
</dbReference>
<dbReference type="Pfam" id="PF12838">
    <property type="entry name" value="Fer4_7"/>
    <property type="match status" value="3"/>
</dbReference>
<dbReference type="SUPFAM" id="SSF54862">
    <property type="entry name" value="4Fe-4S ferredoxins"/>
    <property type="match status" value="1"/>
</dbReference>
<dbReference type="SUPFAM" id="SSF46548">
    <property type="entry name" value="alpha-helical ferredoxin"/>
    <property type="match status" value="1"/>
</dbReference>
<dbReference type="PROSITE" id="PS00198">
    <property type="entry name" value="4FE4S_FER_1"/>
    <property type="match status" value="5"/>
</dbReference>
<dbReference type="PROSITE" id="PS51379">
    <property type="entry name" value="4FE4S_FER_2"/>
    <property type="match status" value="8"/>
</dbReference>
<protein>
    <recommendedName>
        <fullName>Uncharacterized polyferredoxin-like protein MJ0514.2</fullName>
    </recommendedName>
</protein>
<sequence>MIVMASSLWYLYEFARKKWIKRFIDAKSDKSSYIPPERYRKIPPIVKFPEKCISCEGCKESCPAFAIEMIYNEEYNKKLPVIDEGSCVACANCIEVCPTGVLEMDKHRVETEGLFFDKPKYSNLIIDEEVCVRCGNCERACPINVIERKEGKYVINMALCISCKECIKVCPIENAIVVVDEKTLKEKIDKAFEIKNKKITGKLEIKENVIEKIPHIVSGLCVSCGICKDVCVGEIDLNEKKVVECVKCGLCIEVCSTTAIRIYKPIIPKRKDICYVIDEDLCIGCRICQKVCGSGAIKISKETKLPYIVPELCVRGGACARECPVGAIKVVKPEEAEEAVKVRIIEDKIIESIEKDLVLYTEKYGKVKEEIEKLSLKKLKEELKRRVYEENKRIMEKKRELYDKGNNS</sequence>
<accession>P81293</accession>
<evidence type="ECO:0000255" key="1"/>
<evidence type="ECO:0000255" key="2">
    <source>
        <dbReference type="PROSITE-ProRule" id="PRU00711"/>
    </source>
</evidence>
<keyword id="KW-0004">4Fe-4S</keyword>
<keyword id="KW-0249">Electron transport</keyword>
<keyword id="KW-0408">Iron</keyword>
<keyword id="KW-0411">Iron-sulfur</keyword>
<keyword id="KW-0479">Metal-binding</keyword>
<keyword id="KW-1185">Reference proteome</keyword>
<keyword id="KW-0677">Repeat</keyword>
<keyword id="KW-0813">Transport</keyword>
<gene>
    <name type="ordered locus">MJ0514.2</name>
</gene>
<organism>
    <name type="scientific">Methanocaldococcus jannaschii (strain ATCC 43067 / DSM 2661 / JAL-1 / JCM 10045 / NBRC 100440)</name>
    <name type="common">Methanococcus jannaschii</name>
    <dbReference type="NCBI Taxonomy" id="243232"/>
    <lineage>
        <taxon>Archaea</taxon>
        <taxon>Methanobacteriati</taxon>
        <taxon>Methanobacteriota</taxon>
        <taxon>Methanomada group</taxon>
        <taxon>Methanococci</taxon>
        <taxon>Methanococcales</taxon>
        <taxon>Methanocaldococcaceae</taxon>
        <taxon>Methanocaldococcus</taxon>
    </lineage>
</organism>
<name>Y51B_METJA</name>